<evidence type="ECO:0000250" key="1"/>
<evidence type="ECO:0000255" key="2"/>
<evidence type="ECO:0000255" key="3">
    <source>
        <dbReference type="PROSITE-ProRule" id="PRU00059"/>
    </source>
</evidence>
<evidence type="ECO:0000305" key="4"/>
<comment type="function">
    <text>Inhibitor of sperm motility.</text>
</comment>
<comment type="subcellular location">
    <subcellularLocation>
        <location>Secreted</location>
    </subcellularLocation>
</comment>
<comment type="tissue specificity">
    <text>Seminal plasma or sperm.</text>
</comment>
<comment type="similarity">
    <text evidence="4">Belongs to the spermadhesin family.</text>
</comment>
<reference key="1">
    <citation type="journal article" date="1995" name="FEBS Lett.">
        <title>Cloning of boar SPMI gene which is expressed specifically in seminal vesicle and codes for a sperm motility inhibitor protein.</title>
        <authorList>
            <person name="Iwamoto T."/>
            <person name="Hiroaki H."/>
            <person name="Furuichi Y."/>
            <person name="Wada K."/>
            <person name="Satoh M."/>
            <person name="Satoh M."/>
            <person name="Osada T."/>
            <person name="Gagnon C."/>
        </authorList>
    </citation>
    <scope>NUCLEOTIDE SEQUENCE [MRNA]</scope>
    <source>
        <tissue>Seminal vesicle</tissue>
    </source>
</reference>
<protein>
    <recommendedName>
        <fullName>Seminal plasma sperm motility inhibitor</fullName>
    </recommendedName>
</protein>
<keyword id="KW-1015">Disulfide bond</keyword>
<keyword id="KW-0278">Fertilization</keyword>
<keyword id="KW-0325">Glycoprotein</keyword>
<keyword id="KW-0358">Heparin-binding</keyword>
<keyword id="KW-1185">Reference proteome</keyword>
<keyword id="KW-0964">Secreted</keyword>
<keyword id="KW-0732">Signal</keyword>
<organism>
    <name type="scientific">Sus scrofa</name>
    <name type="common">Pig</name>
    <dbReference type="NCBI Taxonomy" id="9823"/>
    <lineage>
        <taxon>Eukaryota</taxon>
        <taxon>Metazoa</taxon>
        <taxon>Chordata</taxon>
        <taxon>Craniata</taxon>
        <taxon>Vertebrata</taxon>
        <taxon>Euteleostomi</taxon>
        <taxon>Mammalia</taxon>
        <taxon>Eutheria</taxon>
        <taxon>Laurasiatheria</taxon>
        <taxon>Artiodactyla</taxon>
        <taxon>Suina</taxon>
        <taxon>Suidae</taxon>
        <taxon>Sus</taxon>
    </lineage>
</organism>
<dbReference type="EMBL" id="S80568">
    <property type="protein sequence ID" value="AAB35000.2"/>
    <property type="molecule type" value="mRNA"/>
</dbReference>
<dbReference type="PIR" id="S72508">
    <property type="entry name" value="S72508"/>
</dbReference>
<dbReference type="STRING" id="9823.ENSSSCP00000003222"/>
<dbReference type="GlyCosmos" id="Q28920">
    <property type="glycosylation" value="1 site, No reported glycans"/>
</dbReference>
<dbReference type="GlyGen" id="Q28920">
    <property type="glycosylation" value="1 site"/>
</dbReference>
<dbReference type="PaxDb" id="9823-ENSSSCP00000003222"/>
<dbReference type="eggNOG" id="ENOG502TD48">
    <property type="taxonomic scope" value="Eukaryota"/>
</dbReference>
<dbReference type="InParanoid" id="Q28920"/>
<dbReference type="Proteomes" id="UP000008227">
    <property type="component" value="Unplaced"/>
</dbReference>
<dbReference type="Proteomes" id="UP000314985">
    <property type="component" value="Unplaced"/>
</dbReference>
<dbReference type="Proteomes" id="UP000694570">
    <property type="component" value="Unplaced"/>
</dbReference>
<dbReference type="Proteomes" id="UP000694571">
    <property type="component" value="Unplaced"/>
</dbReference>
<dbReference type="Proteomes" id="UP000694720">
    <property type="component" value="Unplaced"/>
</dbReference>
<dbReference type="Proteomes" id="UP000694722">
    <property type="component" value="Unplaced"/>
</dbReference>
<dbReference type="Proteomes" id="UP000694723">
    <property type="component" value="Unplaced"/>
</dbReference>
<dbReference type="Proteomes" id="UP000694724">
    <property type="component" value="Unplaced"/>
</dbReference>
<dbReference type="Proteomes" id="UP000694725">
    <property type="component" value="Unplaced"/>
</dbReference>
<dbReference type="Proteomes" id="UP000694726">
    <property type="component" value="Unplaced"/>
</dbReference>
<dbReference type="Proteomes" id="UP000694727">
    <property type="component" value="Unplaced"/>
</dbReference>
<dbReference type="Proteomes" id="UP000694728">
    <property type="component" value="Unplaced"/>
</dbReference>
<dbReference type="GO" id="GO:0005576">
    <property type="term" value="C:extracellular region"/>
    <property type="evidence" value="ECO:0007669"/>
    <property type="project" value="UniProtKB-SubCell"/>
</dbReference>
<dbReference type="GO" id="GO:0008201">
    <property type="term" value="F:heparin binding"/>
    <property type="evidence" value="ECO:0007669"/>
    <property type="project" value="UniProtKB-KW"/>
</dbReference>
<dbReference type="GO" id="GO:0007338">
    <property type="term" value="P:single fertilization"/>
    <property type="evidence" value="ECO:0007669"/>
    <property type="project" value="UniProtKB-KW"/>
</dbReference>
<dbReference type="CDD" id="cd00041">
    <property type="entry name" value="CUB"/>
    <property type="match status" value="1"/>
</dbReference>
<dbReference type="Gene3D" id="2.60.120.290">
    <property type="entry name" value="Spermadhesin, CUB domain"/>
    <property type="match status" value="1"/>
</dbReference>
<dbReference type="InterPro" id="IPR000859">
    <property type="entry name" value="CUB_dom"/>
</dbReference>
<dbReference type="InterPro" id="IPR035914">
    <property type="entry name" value="Sperma_CUB_dom_sf"/>
</dbReference>
<dbReference type="InterPro" id="IPR000124">
    <property type="entry name" value="Spermadhesin"/>
</dbReference>
<dbReference type="Pfam" id="PF00431">
    <property type="entry name" value="CUB"/>
    <property type="match status" value="1"/>
</dbReference>
<dbReference type="SMART" id="SM00042">
    <property type="entry name" value="CUB"/>
    <property type="match status" value="1"/>
</dbReference>
<dbReference type="SUPFAM" id="SSF49854">
    <property type="entry name" value="Spermadhesin, CUB domain"/>
    <property type="match status" value="1"/>
</dbReference>
<dbReference type="PROSITE" id="PS01180">
    <property type="entry name" value="CUB"/>
    <property type="match status" value="1"/>
</dbReference>
<dbReference type="PROSITE" id="PS00985">
    <property type="entry name" value="SPERMADHESIN_1"/>
    <property type="match status" value="1"/>
</dbReference>
<accession>Q28920</accession>
<sequence>MKLGSAIPWALLLSTXTLVSTAQNKGSDDCGGFLKNYSGWISYYKALTTNCVWTIEMKPGHKIILQILPLNLWTIEMKLEVRDQRAGPDNFLKVCGGTTFVYQSSSNVATVKYSRESHHPASSFNVYFYGIPQGAKA</sequence>
<feature type="signal peptide" evidence="1">
    <location>
        <begin position="1"/>
        <end position="21"/>
    </location>
</feature>
<feature type="chain" id="PRO_0000033190" description="Seminal plasma sperm motility inhibitor">
    <location>
        <begin position="22"/>
        <end position="137"/>
    </location>
</feature>
<feature type="domain" description="CUB" evidence="3">
    <location>
        <begin position="30"/>
        <end position="131"/>
    </location>
</feature>
<feature type="glycosylation site" description="N-linked (GlcNAc...) asparagine" evidence="2">
    <location>
        <position position="36"/>
    </location>
</feature>
<feature type="disulfide bond" evidence="3">
    <location>
        <begin position="30"/>
        <end position="51"/>
    </location>
</feature>
<name>SPMI_PIG</name>
<gene>
    <name type="primary">SPMI</name>
</gene>
<proteinExistence type="evidence at transcript level"/>